<organism>
    <name type="scientific">Geobacter sulfurreducens (strain ATCC 51573 / DSM 12127 / PCA)</name>
    <dbReference type="NCBI Taxonomy" id="243231"/>
    <lineage>
        <taxon>Bacteria</taxon>
        <taxon>Pseudomonadati</taxon>
        <taxon>Thermodesulfobacteriota</taxon>
        <taxon>Desulfuromonadia</taxon>
        <taxon>Geobacterales</taxon>
        <taxon>Geobacteraceae</taxon>
        <taxon>Geobacter</taxon>
    </lineage>
</organism>
<evidence type="ECO:0000255" key="1">
    <source>
        <dbReference type="HAMAP-Rule" id="MF_00278"/>
    </source>
</evidence>
<comment type="function">
    <text evidence="1">IGPS catalyzes the conversion of PRFAR and glutamine to IGP, AICAR and glutamate. The HisH subunit catalyzes the hydrolysis of glutamine to glutamate and ammonia as part of the synthesis of IGP and AICAR. The resulting ammonia molecule is channeled to the active site of HisF.</text>
</comment>
<comment type="catalytic activity">
    <reaction evidence="1">
        <text>5-[(5-phospho-1-deoxy-D-ribulos-1-ylimino)methylamino]-1-(5-phospho-beta-D-ribosyl)imidazole-4-carboxamide + L-glutamine = D-erythro-1-(imidazol-4-yl)glycerol 3-phosphate + 5-amino-1-(5-phospho-beta-D-ribosyl)imidazole-4-carboxamide + L-glutamate + H(+)</text>
        <dbReference type="Rhea" id="RHEA:24793"/>
        <dbReference type="ChEBI" id="CHEBI:15378"/>
        <dbReference type="ChEBI" id="CHEBI:29985"/>
        <dbReference type="ChEBI" id="CHEBI:58278"/>
        <dbReference type="ChEBI" id="CHEBI:58359"/>
        <dbReference type="ChEBI" id="CHEBI:58475"/>
        <dbReference type="ChEBI" id="CHEBI:58525"/>
        <dbReference type="EC" id="4.3.2.10"/>
    </reaction>
</comment>
<comment type="catalytic activity">
    <reaction evidence="1">
        <text>L-glutamine + H2O = L-glutamate + NH4(+)</text>
        <dbReference type="Rhea" id="RHEA:15889"/>
        <dbReference type="ChEBI" id="CHEBI:15377"/>
        <dbReference type="ChEBI" id="CHEBI:28938"/>
        <dbReference type="ChEBI" id="CHEBI:29985"/>
        <dbReference type="ChEBI" id="CHEBI:58359"/>
        <dbReference type="EC" id="3.5.1.2"/>
    </reaction>
</comment>
<comment type="pathway">
    <text evidence="1">Amino-acid biosynthesis; L-histidine biosynthesis; L-histidine from 5-phospho-alpha-D-ribose 1-diphosphate: step 5/9.</text>
</comment>
<comment type="subunit">
    <text evidence="1">Heterodimer of HisH and HisF.</text>
</comment>
<comment type="subcellular location">
    <subcellularLocation>
        <location evidence="1">Cytoplasm</location>
    </subcellularLocation>
</comment>
<accession>P60599</accession>
<gene>
    <name evidence="1" type="primary">hisH</name>
    <name type="ordered locus">GSU3097</name>
</gene>
<proteinExistence type="inferred from homology"/>
<reference key="1">
    <citation type="journal article" date="2003" name="Science">
        <title>Genome of Geobacter sulfurreducens: metal reduction in subsurface environments.</title>
        <authorList>
            <person name="Methe B.A."/>
            <person name="Nelson K.E."/>
            <person name="Eisen J.A."/>
            <person name="Paulsen I.T."/>
            <person name="Nelson W.C."/>
            <person name="Heidelberg J.F."/>
            <person name="Wu D."/>
            <person name="Wu M."/>
            <person name="Ward N.L."/>
            <person name="Beanan M.J."/>
            <person name="Dodson R.J."/>
            <person name="Madupu R."/>
            <person name="Brinkac L.M."/>
            <person name="Daugherty S.C."/>
            <person name="DeBoy R.T."/>
            <person name="Durkin A.S."/>
            <person name="Gwinn M.L."/>
            <person name="Kolonay J.F."/>
            <person name="Sullivan S.A."/>
            <person name="Haft D.H."/>
            <person name="Selengut J."/>
            <person name="Davidsen T.M."/>
            <person name="Zafar N."/>
            <person name="White O."/>
            <person name="Tran B."/>
            <person name="Romero C."/>
            <person name="Forberger H.A."/>
            <person name="Weidman J.F."/>
            <person name="Khouri H.M."/>
            <person name="Feldblyum T.V."/>
            <person name="Utterback T.R."/>
            <person name="Van Aken S.E."/>
            <person name="Lovley D.R."/>
            <person name="Fraser C.M."/>
        </authorList>
    </citation>
    <scope>NUCLEOTIDE SEQUENCE [LARGE SCALE GENOMIC DNA]</scope>
    <source>
        <strain>ATCC 51573 / DSM 12127 / PCA</strain>
    </source>
</reference>
<dbReference type="EC" id="4.3.2.10" evidence="1"/>
<dbReference type="EC" id="3.5.1.2" evidence="1"/>
<dbReference type="EMBL" id="AE017180">
    <property type="protein sequence ID" value="AAR36488.1"/>
    <property type="molecule type" value="Genomic_DNA"/>
</dbReference>
<dbReference type="RefSeq" id="NP_954138.1">
    <property type="nucleotide sequence ID" value="NC_002939.5"/>
</dbReference>
<dbReference type="RefSeq" id="WP_010943718.1">
    <property type="nucleotide sequence ID" value="NC_002939.5"/>
</dbReference>
<dbReference type="SMR" id="P60599"/>
<dbReference type="FunCoup" id="P60599">
    <property type="interactions" value="332"/>
</dbReference>
<dbReference type="STRING" id="243231.GSU3097"/>
<dbReference type="EnsemblBacteria" id="AAR36488">
    <property type="protein sequence ID" value="AAR36488"/>
    <property type="gene ID" value="GSU3097"/>
</dbReference>
<dbReference type="KEGG" id="gsu:GSU3097"/>
<dbReference type="PATRIC" id="fig|243231.5.peg.3121"/>
<dbReference type="eggNOG" id="COG0118">
    <property type="taxonomic scope" value="Bacteria"/>
</dbReference>
<dbReference type="HOGENOM" id="CLU_071837_2_2_7"/>
<dbReference type="InParanoid" id="P60599"/>
<dbReference type="OrthoDB" id="9807749at2"/>
<dbReference type="UniPathway" id="UPA00031">
    <property type="reaction ID" value="UER00010"/>
</dbReference>
<dbReference type="Proteomes" id="UP000000577">
    <property type="component" value="Chromosome"/>
</dbReference>
<dbReference type="GO" id="GO:0005737">
    <property type="term" value="C:cytoplasm"/>
    <property type="evidence" value="ECO:0007669"/>
    <property type="project" value="UniProtKB-SubCell"/>
</dbReference>
<dbReference type="GO" id="GO:0004359">
    <property type="term" value="F:glutaminase activity"/>
    <property type="evidence" value="ECO:0007669"/>
    <property type="project" value="UniProtKB-EC"/>
</dbReference>
<dbReference type="GO" id="GO:0000107">
    <property type="term" value="F:imidazoleglycerol-phosphate synthase activity"/>
    <property type="evidence" value="ECO:0000318"/>
    <property type="project" value="GO_Central"/>
</dbReference>
<dbReference type="GO" id="GO:0016829">
    <property type="term" value="F:lyase activity"/>
    <property type="evidence" value="ECO:0007669"/>
    <property type="project" value="UniProtKB-KW"/>
</dbReference>
<dbReference type="GO" id="GO:0000105">
    <property type="term" value="P:L-histidine biosynthetic process"/>
    <property type="evidence" value="ECO:0007669"/>
    <property type="project" value="UniProtKB-UniRule"/>
</dbReference>
<dbReference type="CDD" id="cd01748">
    <property type="entry name" value="GATase1_IGP_Synthase"/>
    <property type="match status" value="1"/>
</dbReference>
<dbReference type="FunFam" id="3.40.50.880:FF:000023">
    <property type="entry name" value="Imidazole glycerol phosphate synthase subunit HisH"/>
    <property type="match status" value="1"/>
</dbReference>
<dbReference type="Gene3D" id="3.40.50.880">
    <property type="match status" value="1"/>
</dbReference>
<dbReference type="HAMAP" id="MF_00278">
    <property type="entry name" value="HisH"/>
    <property type="match status" value="1"/>
</dbReference>
<dbReference type="InterPro" id="IPR029062">
    <property type="entry name" value="Class_I_gatase-like"/>
</dbReference>
<dbReference type="InterPro" id="IPR017926">
    <property type="entry name" value="GATASE"/>
</dbReference>
<dbReference type="InterPro" id="IPR010139">
    <property type="entry name" value="Imidazole-glycPsynth_HisH"/>
</dbReference>
<dbReference type="NCBIfam" id="TIGR01855">
    <property type="entry name" value="IMP_synth_hisH"/>
    <property type="match status" value="1"/>
</dbReference>
<dbReference type="PANTHER" id="PTHR42701">
    <property type="entry name" value="IMIDAZOLE GLYCEROL PHOSPHATE SYNTHASE SUBUNIT HISH"/>
    <property type="match status" value="1"/>
</dbReference>
<dbReference type="PANTHER" id="PTHR42701:SF1">
    <property type="entry name" value="IMIDAZOLE GLYCEROL PHOSPHATE SYNTHASE SUBUNIT HISH"/>
    <property type="match status" value="1"/>
</dbReference>
<dbReference type="Pfam" id="PF00117">
    <property type="entry name" value="GATase"/>
    <property type="match status" value="1"/>
</dbReference>
<dbReference type="PIRSF" id="PIRSF000495">
    <property type="entry name" value="Amidotransf_hisH"/>
    <property type="match status" value="1"/>
</dbReference>
<dbReference type="SUPFAM" id="SSF52317">
    <property type="entry name" value="Class I glutamine amidotransferase-like"/>
    <property type="match status" value="1"/>
</dbReference>
<dbReference type="PROSITE" id="PS51273">
    <property type="entry name" value="GATASE_TYPE_1"/>
    <property type="match status" value="1"/>
</dbReference>
<name>HIS5_GEOSL</name>
<keyword id="KW-0028">Amino-acid biosynthesis</keyword>
<keyword id="KW-0963">Cytoplasm</keyword>
<keyword id="KW-0315">Glutamine amidotransferase</keyword>
<keyword id="KW-0368">Histidine biosynthesis</keyword>
<keyword id="KW-0378">Hydrolase</keyword>
<keyword id="KW-0456">Lyase</keyword>
<keyword id="KW-1185">Reference proteome</keyword>
<protein>
    <recommendedName>
        <fullName evidence="1">Imidazole glycerol phosphate synthase subunit HisH</fullName>
        <ecNumber evidence="1">4.3.2.10</ecNumber>
    </recommendedName>
    <alternativeName>
        <fullName evidence="1">IGP synthase glutaminase subunit</fullName>
        <ecNumber evidence="1">3.5.1.2</ecNumber>
    </alternativeName>
    <alternativeName>
        <fullName evidence="1">IGP synthase subunit HisH</fullName>
    </alternativeName>
    <alternativeName>
        <fullName evidence="1">ImGP synthase subunit HisH</fullName>
        <shortName evidence="1">IGPS subunit HisH</shortName>
    </alternativeName>
</protein>
<sequence>MTKIAIIDYGMGNLRSVQKGFEKVGFEAVVTADPKVVLEAEKIVLPGVGAFRDCMRNLEQGGFVEPILRVIREGRPFLGICVGMQLLLTDSVEFGLYQGLNVIPGHVLRFPEGMREGGEELKVPHMGWNQLSIKRRPPAFAEVEDGANVYFVHSYYEMPDDESVIAATCTYGVEFCAAIWKDNIVATQFHPEKSQAVGLSILKNFGEMK</sequence>
<feature type="chain" id="PRO_0000152377" description="Imidazole glycerol phosphate synthase subunit HisH">
    <location>
        <begin position="1"/>
        <end position="209"/>
    </location>
</feature>
<feature type="domain" description="Glutamine amidotransferase type-1" evidence="1">
    <location>
        <begin position="3"/>
        <end position="209"/>
    </location>
</feature>
<feature type="active site" description="Nucleophile" evidence="1">
    <location>
        <position position="81"/>
    </location>
</feature>
<feature type="active site" evidence="1">
    <location>
        <position position="190"/>
    </location>
</feature>
<feature type="active site" evidence="1">
    <location>
        <position position="192"/>
    </location>
</feature>